<reference key="1">
    <citation type="journal article" date="2008" name="J. Bacteriol.">
        <title>Insights into the environmental resistance gene pool from the genome sequence of the multidrug-resistant environmental isolate Escherichia coli SMS-3-5.</title>
        <authorList>
            <person name="Fricke W.F."/>
            <person name="Wright M.S."/>
            <person name="Lindell A.H."/>
            <person name="Harkins D.M."/>
            <person name="Baker-Austin C."/>
            <person name="Ravel J."/>
            <person name="Stepanauskas R."/>
        </authorList>
    </citation>
    <scope>NUCLEOTIDE SEQUENCE [LARGE SCALE GENOMIC DNA]</scope>
    <source>
        <strain>SMS-3-5 / SECEC</strain>
    </source>
</reference>
<proteinExistence type="inferred from homology"/>
<name>NUOK_ECOSM</name>
<dbReference type="EC" id="7.1.1.-" evidence="1"/>
<dbReference type="EMBL" id="CP000970">
    <property type="protein sequence ID" value="ACB17096.1"/>
    <property type="molecule type" value="Genomic_DNA"/>
</dbReference>
<dbReference type="RefSeq" id="WP_000612644.1">
    <property type="nucleotide sequence ID" value="NC_010498.1"/>
</dbReference>
<dbReference type="SMR" id="B1LLN2"/>
<dbReference type="GeneID" id="93033872"/>
<dbReference type="KEGG" id="ecm:EcSMS35_2433"/>
<dbReference type="HOGENOM" id="CLU_144724_0_1_6"/>
<dbReference type="Proteomes" id="UP000007011">
    <property type="component" value="Chromosome"/>
</dbReference>
<dbReference type="GO" id="GO:0030964">
    <property type="term" value="C:NADH dehydrogenase complex"/>
    <property type="evidence" value="ECO:0007669"/>
    <property type="project" value="TreeGrafter"/>
</dbReference>
<dbReference type="GO" id="GO:0005886">
    <property type="term" value="C:plasma membrane"/>
    <property type="evidence" value="ECO:0007669"/>
    <property type="project" value="UniProtKB-SubCell"/>
</dbReference>
<dbReference type="GO" id="GO:0050136">
    <property type="term" value="F:NADH:ubiquinone reductase (non-electrogenic) activity"/>
    <property type="evidence" value="ECO:0007669"/>
    <property type="project" value="UniProtKB-UniRule"/>
</dbReference>
<dbReference type="GO" id="GO:0048038">
    <property type="term" value="F:quinone binding"/>
    <property type="evidence" value="ECO:0007669"/>
    <property type="project" value="UniProtKB-KW"/>
</dbReference>
<dbReference type="GO" id="GO:0042773">
    <property type="term" value="P:ATP synthesis coupled electron transport"/>
    <property type="evidence" value="ECO:0007669"/>
    <property type="project" value="InterPro"/>
</dbReference>
<dbReference type="FunFam" id="1.10.287.3510:FF:000001">
    <property type="entry name" value="NADH-quinone oxidoreductase subunit K"/>
    <property type="match status" value="1"/>
</dbReference>
<dbReference type="Gene3D" id="1.10.287.3510">
    <property type="match status" value="1"/>
</dbReference>
<dbReference type="HAMAP" id="MF_01456">
    <property type="entry name" value="NDH1_NuoK"/>
    <property type="match status" value="1"/>
</dbReference>
<dbReference type="InterPro" id="IPR001133">
    <property type="entry name" value="NADH_UbQ_OxRdtase_chain4L/K"/>
</dbReference>
<dbReference type="InterPro" id="IPR039428">
    <property type="entry name" value="NUOK/Mnh_C1-like"/>
</dbReference>
<dbReference type="NCBIfam" id="NF004319">
    <property type="entry name" value="PRK05715.1-1"/>
    <property type="match status" value="1"/>
</dbReference>
<dbReference type="NCBIfam" id="NF004320">
    <property type="entry name" value="PRK05715.1-2"/>
    <property type="match status" value="1"/>
</dbReference>
<dbReference type="PANTHER" id="PTHR11434:SF16">
    <property type="entry name" value="NADH-UBIQUINONE OXIDOREDUCTASE CHAIN 4L"/>
    <property type="match status" value="1"/>
</dbReference>
<dbReference type="PANTHER" id="PTHR11434">
    <property type="entry name" value="NADH-UBIQUINONE OXIDOREDUCTASE SUBUNIT ND4L"/>
    <property type="match status" value="1"/>
</dbReference>
<dbReference type="Pfam" id="PF00420">
    <property type="entry name" value="Oxidored_q2"/>
    <property type="match status" value="1"/>
</dbReference>
<sequence>MIPLQHGLILAAILFVLGLTGLVIRRNLLFMLIGLEIMINASALAFVVAGSYWGQTDGQVMYILAISLAAAEASIGLALLLQLHRRRQNLNIDSVSEMRG</sequence>
<protein>
    <recommendedName>
        <fullName evidence="1">NADH-quinone oxidoreductase subunit K</fullName>
        <ecNumber evidence="1">7.1.1.-</ecNumber>
    </recommendedName>
    <alternativeName>
        <fullName evidence="1">NADH dehydrogenase I subunit K</fullName>
    </alternativeName>
    <alternativeName>
        <fullName evidence="1">NDH-1 subunit K</fullName>
    </alternativeName>
</protein>
<feature type="chain" id="PRO_0000390047" description="NADH-quinone oxidoreductase subunit K">
    <location>
        <begin position="1"/>
        <end position="100"/>
    </location>
</feature>
<feature type="transmembrane region" description="Helical" evidence="1">
    <location>
        <begin position="4"/>
        <end position="24"/>
    </location>
</feature>
<feature type="transmembrane region" description="Helical" evidence="1">
    <location>
        <begin position="28"/>
        <end position="48"/>
    </location>
</feature>
<feature type="transmembrane region" description="Helical" evidence="1">
    <location>
        <begin position="60"/>
        <end position="80"/>
    </location>
</feature>
<gene>
    <name evidence="1" type="primary">nuoK</name>
    <name type="ordered locus">EcSMS35_2433</name>
</gene>
<organism>
    <name type="scientific">Escherichia coli (strain SMS-3-5 / SECEC)</name>
    <dbReference type="NCBI Taxonomy" id="439855"/>
    <lineage>
        <taxon>Bacteria</taxon>
        <taxon>Pseudomonadati</taxon>
        <taxon>Pseudomonadota</taxon>
        <taxon>Gammaproteobacteria</taxon>
        <taxon>Enterobacterales</taxon>
        <taxon>Enterobacteriaceae</taxon>
        <taxon>Escherichia</taxon>
    </lineage>
</organism>
<keyword id="KW-0997">Cell inner membrane</keyword>
<keyword id="KW-1003">Cell membrane</keyword>
<keyword id="KW-0472">Membrane</keyword>
<keyword id="KW-0520">NAD</keyword>
<keyword id="KW-0874">Quinone</keyword>
<keyword id="KW-1278">Translocase</keyword>
<keyword id="KW-0812">Transmembrane</keyword>
<keyword id="KW-1133">Transmembrane helix</keyword>
<keyword id="KW-0813">Transport</keyword>
<keyword id="KW-0830">Ubiquinone</keyword>
<comment type="function">
    <text evidence="1">NDH-1 shuttles electrons from NADH, via FMN and iron-sulfur (Fe-S) centers, to quinones in the respiratory chain. The immediate electron acceptor for the enzyme in this species is believed to be ubiquinone. Couples the redox reaction to proton translocation (for every two electrons transferred, four hydrogen ions are translocated across the cytoplasmic membrane), and thus conserves the redox energy in a proton gradient.</text>
</comment>
<comment type="catalytic activity">
    <reaction evidence="1">
        <text>a quinone + NADH + 5 H(+)(in) = a quinol + NAD(+) + 4 H(+)(out)</text>
        <dbReference type="Rhea" id="RHEA:57888"/>
        <dbReference type="ChEBI" id="CHEBI:15378"/>
        <dbReference type="ChEBI" id="CHEBI:24646"/>
        <dbReference type="ChEBI" id="CHEBI:57540"/>
        <dbReference type="ChEBI" id="CHEBI:57945"/>
        <dbReference type="ChEBI" id="CHEBI:132124"/>
    </reaction>
</comment>
<comment type="subunit">
    <text evidence="1">NDH-1 is composed of 13 different subunits. Subunits NuoA, H, J, K, L, M, N constitute the membrane sector of the complex.</text>
</comment>
<comment type="subcellular location">
    <subcellularLocation>
        <location evidence="1">Cell inner membrane</location>
        <topology evidence="1">Multi-pass membrane protein</topology>
    </subcellularLocation>
</comment>
<comment type="similarity">
    <text evidence="1">Belongs to the complex I subunit 4L family.</text>
</comment>
<evidence type="ECO:0000255" key="1">
    <source>
        <dbReference type="HAMAP-Rule" id="MF_01456"/>
    </source>
</evidence>
<accession>B1LLN2</accession>